<comment type="function">
    <text evidence="2">May play a role in lysosome motility. May play a role in chromosome segregation.</text>
</comment>
<comment type="function">
    <text evidence="3">(Microbial infection) Component of tomato mosaic virus (ToMV) RNA replication complexes. Required for tobamovirus multiplication, especially for efficient negative-strand RNA synthesis and viral RNA capping.</text>
</comment>
<comment type="subunit">
    <text evidence="2">Interacts with tubulin.</text>
</comment>
<comment type="subcellular location">
    <subcellularLocation>
        <location evidence="2">Late endosome membrane</location>
    </subcellularLocation>
    <subcellularLocation>
        <location evidence="2">Lysosome membrane</location>
    </subcellularLocation>
    <subcellularLocation>
        <location evidence="2">Cytoplasm</location>
        <location evidence="2">Cytoskeleton</location>
        <location evidence="2">Spindle</location>
    </subcellularLocation>
    <text evidence="2">Localizes with microtubules at the spindle mid-zone during mitosis.</text>
</comment>
<comment type="disruption phenotype">
    <text evidence="3">In the triple mutants arl8a-1 arl8b-1 arl8c-1, impaired multiplication of tomato mosaic virus (ToMV).</text>
</comment>
<comment type="similarity">
    <text evidence="6">Belongs to the small GTPase superfamily. Arf family.</text>
</comment>
<comment type="sequence caution" evidence="6">
    <conflict type="erroneous gene model prediction">
        <sequence resource="EMBL-CDS" id="BAB08314"/>
    </conflict>
</comment>
<keyword id="KW-0131">Cell cycle</keyword>
<keyword id="KW-0132">Cell division</keyword>
<keyword id="KW-0159">Chromosome partition</keyword>
<keyword id="KW-0963">Cytoplasm</keyword>
<keyword id="KW-0206">Cytoskeleton</keyword>
<keyword id="KW-0967">Endosome</keyword>
<keyword id="KW-0342">GTP-binding</keyword>
<keyword id="KW-0458">Lysosome</keyword>
<keyword id="KW-0472">Membrane</keyword>
<keyword id="KW-0498">Mitosis</keyword>
<keyword id="KW-0547">Nucleotide-binding</keyword>
<keyword id="KW-1185">Reference proteome</keyword>
<protein>
    <recommendedName>
        <fullName evidence="5">ADP-ribosylation factor-like protein 8c</fullName>
        <shortName evidence="5">AtARL8c</shortName>
    </recommendedName>
    <alternativeName>
        <fullName evidence="4">ADP-ribosylation factor-like A1A</fullName>
        <shortName evidence="4">AtARLA1A</shortName>
    </alternativeName>
</protein>
<gene>
    <name evidence="5" type="primary">ARL8C</name>
    <name evidence="4" type="synonym">ARLA1A</name>
    <name evidence="7" type="ordered locus">At5g37680</name>
    <name evidence="8" type="ORF">K12B20.15</name>
</gene>
<organism>
    <name type="scientific">Arabidopsis thaliana</name>
    <name type="common">Mouse-ear cress</name>
    <dbReference type="NCBI Taxonomy" id="3702"/>
    <lineage>
        <taxon>Eukaryota</taxon>
        <taxon>Viridiplantae</taxon>
        <taxon>Streptophyta</taxon>
        <taxon>Embryophyta</taxon>
        <taxon>Tracheophyta</taxon>
        <taxon>Spermatophyta</taxon>
        <taxon>Magnoliopsida</taxon>
        <taxon>eudicotyledons</taxon>
        <taxon>Gunneridae</taxon>
        <taxon>Pentapetalae</taxon>
        <taxon>rosids</taxon>
        <taxon>malvids</taxon>
        <taxon>Brassicales</taxon>
        <taxon>Brassicaceae</taxon>
        <taxon>Camelineae</taxon>
        <taxon>Arabidopsis</taxon>
    </lineage>
</organism>
<reference key="1">
    <citation type="journal article" date="1999" name="DNA Res.">
        <title>Structural analysis of Arabidopsis thaliana chromosome 5. IX. Sequence features of the regions of 1,011,550 bp covered by seventeen P1 and TAC clones.</title>
        <authorList>
            <person name="Kaneko T."/>
            <person name="Katoh T."/>
            <person name="Sato S."/>
            <person name="Nakamura Y."/>
            <person name="Asamizu E."/>
            <person name="Kotani H."/>
            <person name="Miyajima N."/>
            <person name="Tabata S."/>
        </authorList>
    </citation>
    <scope>NUCLEOTIDE SEQUENCE [LARGE SCALE GENOMIC DNA]</scope>
    <source>
        <strain>cv. Columbia</strain>
    </source>
</reference>
<reference key="2">
    <citation type="journal article" date="2017" name="Plant J.">
        <title>Araport11: a complete reannotation of the Arabidopsis thaliana reference genome.</title>
        <authorList>
            <person name="Cheng C.Y."/>
            <person name="Krishnakumar V."/>
            <person name="Chan A.P."/>
            <person name="Thibaud-Nissen F."/>
            <person name="Schobel S."/>
            <person name="Town C.D."/>
        </authorList>
    </citation>
    <scope>GENOME REANNOTATION</scope>
    <source>
        <strain>cv. Columbia</strain>
    </source>
</reference>
<reference key="3">
    <citation type="journal article" date="2003" name="Science">
        <title>Empirical analysis of transcriptional activity in the Arabidopsis genome.</title>
        <authorList>
            <person name="Yamada K."/>
            <person name="Lim J."/>
            <person name="Dale J.M."/>
            <person name="Chen H."/>
            <person name="Shinn P."/>
            <person name="Palm C.J."/>
            <person name="Southwick A.M."/>
            <person name="Wu H.C."/>
            <person name="Kim C.J."/>
            <person name="Nguyen M."/>
            <person name="Pham P.K."/>
            <person name="Cheuk R.F."/>
            <person name="Karlin-Newmann G."/>
            <person name="Liu S.X."/>
            <person name="Lam B."/>
            <person name="Sakano H."/>
            <person name="Wu T."/>
            <person name="Yu G."/>
            <person name="Miranda M."/>
            <person name="Quach H.L."/>
            <person name="Tripp M."/>
            <person name="Chang C.H."/>
            <person name="Lee J.M."/>
            <person name="Toriumi M.J."/>
            <person name="Chan M.M."/>
            <person name="Tang C.C."/>
            <person name="Onodera C.S."/>
            <person name="Deng J.M."/>
            <person name="Akiyama K."/>
            <person name="Ansari Y."/>
            <person name="Arakawa T."/>
            <person name="Banh J."/>
            <person name="Banno F."/>
            <person name="Bowser L."/>
            <person name="Brooks S.Y."/>
            <person name="Carninci P."/>
            <person name="Chao Q."/>
            <person name="Choy N."/>
            <person name="Enju A."/>
            <person name="Goldsmith A.D."/>
            <person name="Gurjal M."/>
            <person name="Hansen N.F."/>
            <person name="Hayashizaki Y."/>
            <person name="Johnson-Hopson C."/>
            <person name="Hsuan V.W."/>
            <person name="Iida K."/>
            <person name="Karnes M."/>
            <person name="Khan S."/>
            <person name="Koesema E."/>
            <person name="Ishida J."/>
            <person name="Jiang P.X."/>
            <person name="Jones T."/>
            <person name="Kawai J."/>
            <person name="Kamiya A."/>
            <person name="Meyers C."/>
            <person name="Nakajima M."/>
            <person name="Narusaka M."/>
            <person name="Seki M."/>
            <person name="Sakurai T."/>
            <person name="Satou M."/>
            <person name="Tamse R."/>
            <person name="Vaysberg M."/>
            <person name="Wallender E.K."/>
            <person name="Wong C."/>
            <person name="Yamamura Y."/>
            <person name="Yuan S."/>
            <person name="Shinozaki K."/>
            <person name="Davis R.W."/>
            <person name="Theologis A."/>
            <person name="Ecker J.R."/>
        </authorList>
    </citation>
    <scope>NUCLEOTIDE SEQUENCE [LARGE SCALE MRNA]</scope>
    <source>
        <strain>cv. Columbia</strain>
    </source>
</reference>
<reference key="4">
    <citation type="submission" date="2002-03" db="EMBL/GenBank/DDBJ databases">
        <title>Full-length cDNA from Arabidopsis thaliana.</title>
        <authorList>
            <person name="Brover V.V."/>
            <person name="Troukhan M.E."/>
            <person name="Alexandrov N.A."/>
            <person name="Lu Y.-P."/>
            <person name="Flavell R.B."/>
            <person name="Feldmann K.A."/>
        </authorList>
    </citation>
    <scope>NUCLEOTIDE SEQUENCE [LARGE SCALE MRNA]</scope>
</reference>
<reference key="5">
    <citation type="journal article" date="2003" name="Plant Physiol.">
        <title>Analysis of the small GTPase gene superfamily of Arabidopsis.</title>
        <authorList>
            <person name="Vernoud V."/>
            <person name="Horton A.C."/>
            <person name="Yang Z."/>
            <person name="Nielsen E."/>
        </authorList>
    </citation>
    <scope>GENE FAMILY</scope>
    <scope>NOMENCLATURE</scope>
</reference>
<reference key="6">
    <citation type="journal article" date="2005" name="J. Exp. Bot.">
        <title>Genes encoding ADP-ribosylation factors in Arabidopsis thaliana; genome analysis and antisense suppression.</title>
        <authorList>
            <person name="Gebbie L.K."/>
            <person name="Burn J.E."/>
            <person name="Hocart C.H."/>
            <person name="Williamson R.E."/>
        </authorList>
    </citation>
    <scope>GENE FAMILY</scope>
</reference>
<reference key="7">
    <citation type="journal article" date="2011" name="PLoS Pathog.">
        <title>A host small GTP-binding protein ARL8 plays crucial roles in tobamovirus RNA replication.</title>
        <authorList>
            <person name="Nishikiori M."/>
            <person name="Mori M."/>
            <person name="Dohi K."/>
            <person name="Okamura H."/>
            <person name="Katoh E."/>
            <person name="Naito S."/>
            <person name="Meshi T."/>
            <person name="Ishikawa M."/>
        </authorList>
    </citation>
    <scope>FUNCTION (MICROBIAL INFECTION)</scope>
    <scope>DISRUPTION PHENOTYPE</scope>
    <scope>GENE FAMILY</scope>
    <scope>NOMENCLATURE</scope>
    <source>
        <strain>cv. Columbia</strain>
    </source>
</reference>
<evidence type="ECO:0000250" key="1">
    <source>
        <dbReference type="UniProtKB" id="P62330"/>
    </source>
</evidence>
<evidence type="ECO:0000250" key="2">
    <source>
        <dbReference type="UniProtKB" id="Q9NVJ2"/>
    </source>
</evidence>
<evidence type="ECO:0000269" key="3">
    <source>
    </source>
</evidence>
<evidence type="ECO:0000303" key="4">
    <source>
    </source>
</evidence>
<evidence type="ECO:0000303" key="5">
    <source>
    </source>
</evidence>
<evidence type="ECO:0000305" key="6"/>
<evidence type="ECO:0000312" key="7">
    <source>
        <dbReference type="Araport" id="AT5G37680"/>
    </source>
</evidence>
<evidence type="ECO:0000312" key="8">
    <source>
        <dbReference type="EMBL" id="BAB08314.1"/>
    </source>
</evidence>
<dbReference type="EMBL" id="AB018107">
    <property type="protein sequence ID" value="BAB08314.1"/>
    <property type="status" value="ALT_SEQ"/>
    <property type="molecule type" value="Genomic_DNA"/>
</dbReference>
<dbReference type="EMBL" id="CP002688">
    <property type="protein sequence ID" value="AED94219.1"/>
    <property type="molecule type" value="Genomic_DNA"/>
</dbReference>
<dbReference type="EMBL" id="AY062658">
    <property type="protein sequence ID" value="AAL32736.1"/>
    <property type="molecule type" value="mRNA"/>
</dbReference>
<dbReference type="EMBL" id="AY114643">
    <property type="protein sequence ID" value="AAM47962.1"/>
    <property type="molecule type" value="mRNA"/>
</dbReference>
<dbReference type="EMBL" id="AY085271">
    <property type="protein sequence ID" value="AAM62503.1"/>
    <property type="molecule type" value="mRNA"/>
</dbReference>
<dbReference type="RefSeq" id="NP_568553.1">
    <property type="nucleotide sequence ID" value="NM_123127.4"/>
</dbReference>
<dbReference type="SMR" id="Q8W4C8"/>
<dbReference type="FunCoup" id="Q8W4C8">
    <property type="interactions" value="3379"/>
</dbReference>
<dbReference type="IntAct" id="Q8W4C8">
    <property type="interactions" value="2"/>
</dbReference>
<dbReference type="STRING" id="3702.Q8W4C8"/>
<dbReference type="PaxDb" id="3702-AT5G37680.1"/>
<dbReference type="ProteomicsDB" id="246669"/>
<dbReference type="EnsemblPlants" id="AT5G37680.1">
    <property type="protein sequence ID" value="AT5G37680.1"/>
    <property type="gene ID" value="AT5G37680"/>
</dbReference>
<dbReference type="GeneID" id="833747"/>
<dbReference type="Gramene" id="AT5G37680.1">
    <property type="protein sequence ID" value="AT5G37680.1"/>
    <property type="gene ID" value="AT5G37680"/>
</dbReference>
<dbReference type="KEGG" id="ath:AT5G37680"/>
<dbReference type="Araport" id="AT5G37680"/>
<dbReference type="TAIR" id="AT5G37680">
    <property type="gene designation" value="ARLA1A"/>
</dbReference>
<dbReference type="eggNOG" id="KOG0075">
    <property type="taxonomic scope" value="Eukaryota"/>
</dbReference>
<dbReference type="HOGENOM" id="CLU_040729_10_1_1"/>
<dbReference type="InParanoid" id="Q8W4C8"/>
<dbReference type="OMA" id="RFRSEWG"/>
<dbReference type="OrthoDB" id="2011769at2759"/>
<dbReference type="PhylomeDB" id="Q8W4C8"/>
<dbReference type="PRO" id="PR:Q8W4C8"/>
<dbReference type="Proteomes" id="UP000006548">
    <property type="component" value="Chromosome 5"/>
</dbReference>
<dbReference type="ExpressionAtlas" id="Q8W4C8">
    <property type="expression patterns" value="baseline and differential"/>
</dbReference>
<dbReference type="GO" id="GO:0031902">
    <property type="term" value="C:late endosome membrane"/>
    <property type="evidence" value="ECO:0007669"/>
    <property type="project" value="UniProtKB-SubCell"/>
</dbReference>
<dbReference type="GO" id="GO:0005765">
    <property type="term" value="C:lysosomal membrane"/>
    <property type="evidence" value="ECO:0007669"/>
    <property type="project" value="UniProtKB-SubCell"/>
</dbReference>
<dbReference type="GO" id="GO:0009536">
    <property type="term" value="C:plastid"/>
    <property type="evidence" value="ECO:0007005"/>
    <property type="project" value="TAIR"/>
</dbReference>
<dbReference type="GO" id="GO:0005819">
    <property type="term" value="C:spindle"/>
    <property type="evidence" value="ECO:0007669"/>
    <property type="project" value="UniProtKB-SubCell"/>
</dbReference>
<dbReference type="GO" id="GO:0005525">
    <property type="term" value="F:GTP binding"/>
    <property type="evidence" value="ECO:0000250"/>
    <property type="project" value="TAIR"/>
</dbReference>
<dbReference type="GO" id="GO:0003924">
    <property type="term" value="F:GTPase activity"/>
    <property type="evidence" value="ECO:0007669"/>
    <property type="project" value="InterPro"/>
</dbReference>
<dbReference type="GO" id="GO:0051301">
    <property type="term" value="P:cell division"/>
    <property type="evidence" value="ECO:0007669"/>
    <property type="project" value="UniProtKB-KW"/>
</dbReference>
<dbReference type="GO" id="GO:0007059">
    <property type="term" value="P:chromosome segregation"/>
    <property type="evidence" value="ECO:0007669"/>
    <property type="project" value="UniProtKB-KW"/>
</dbReference>
<dbReference type="GO" id="GO:0051607">
    <property type="term" value="P:defense response to virus"/>
    <property type="evidence" value="ECO:0000316"/>
    <property type="project" value="TAIR"/>
</dbReference>
<dbReference type="GO" id="GO:0015031">
    <property type="term" value="P:protein transport"/>
    <property type="evidence" value="ECO:0007669"/>
    <property type="project" value="InterPro"/>
</dbReference>
<dbReference type="CDD" id="cd04159">
    <property type="entry name" value="Arl10_like"/>
    <property type="match status" value="1"/>
</dbReference>
<dbReference type="FunFam" id="3.40.50.300:FF:000441">
    <property type="entry name" value="ADP-ribosylation factor-like protein 8a"/>
    <property type="match status" value="1"/>
</dbReference>
<dbReference type="Gene3D" id="3.40.50.300">
    <property type="entry name" value="P-loop containing nucleotide triphosphate hydrolases"/>
    <property type="match status" value="1"/>
</dbReference>
<dbReference type="InterPro" id="IPR044154">
    <property type="entry name" value="Arl8a/8b"/>
</dbReference>
<dbReference type="InterPro" id="IPR027417">
    <property type="entry name" value="P-loop_NTPase"/>
</dbReference>
<dbReference type="InterPro" id="IPR005225">
    <property type="entry name" value="Small_GTP-bd"/>
</dbReference>
<dbReference type="InterPro" id="IPR006689">
    <property type="entry name" value="Small_GTPase_ARF/SAR"/>
</dbReference>
<dbReference type="NCBIfam" id="TIGR00231">
    <property type="entry name" value="small_GTP"/>
    <property type="match status" value="1"/>
</dbReference>
<dbReference type="PANTHER" id="PTHR45732">
    <property type="entry name" value="ADP-RIBOSYLATION FACTOR-LIKE PROTEIN 8"/>
    <property type="match status" value="1"/>
</dbReference>
<dbReference type="PANTHER" id="PTHR45732:SF12">
    <property type="entry name" value="ADP-RIBOSYLATION FACTOR-LIKE PROTEIN 8C"/>
    <property type="match status" value="1"/>
</dbReference>
<dbReference type="Pfam" id="PF00025">
    <property type="entry name" value="Arf"/>
    <property type="match status" value="1"/>
</dbReference>
<dbReference type="PRINTS" id="PR00328">
    <property type="entry name" value="SAR1GTPBP"/>
</dbReference>
<dbReference type="SMART" id="SM00177">
    <property type="entry name" value="ARF"/>
    <property type="match status" value="1"/>
</dbReference>
<dbReference type="SMART" id="SM00175">
    <property type="entry name" value="RAB"/>
    <property type="match status" value="1"/>
</dbReference>
<dbReference type="SMART" id="SM00173">
    <property type="entry name" value="RAS"/>
    <property type="match status" value="1"/>
</dbReference>
<dbReference type="SMART" id="SM00178">
    <property type="entry name" value="SAR"/>
    <property type="match status" value="1"/>
</dbReference>
<dbReference type="SUPFAM" id="SSF52540">
    <property type="entry name" value="P-loop containing nucleoside triphosphate hydrolases"/>
    <property type="match status" value="1"/>
</dbReference>
<dbReference type="PROSITE" id="PS51417">
    <property type="entry name" value="ARF"/>
    <property type="match status" value="1"/>
</dbReference>
<proteinExistence type="evidence at transcript level"/>
<name>ARL8C_ARATH</name>
<feature type="chain" id="PRO_0000438005" description="ADP-ribosylation factor-like protein 8c">
    <location>
        <begin position="1"/>
        <end position="184"/>
    </location>
</feature>
<feature type="intramembrane region" description="Note=Mediates targeting to membranes" evidence="2">
    <location>
        <begin position="1"/>
        <end position="18"/>
    </location>
</feature>
<feature type="binding site" evidence="1">
    <location>
        <begin position="29"/>
        <end position="34"/>
    </location>
    <ligand>
        <name>GTP</name>
        <dbReference type="ChEBI" id="CHEBI:37565"/>
    </ligand>
</feature>
<feature type="binding site" evidence="1">
    <location>
        <begin position="48"/>
        <end position="51"/>
    </location>
    <ligand>
        <name>GTP</name>
        <dbReference type="ChEBI" id="CHEBI:37565"/>
    </ligand>
</feature>
<feature type="binding site" evidence="1">
    <location>
        <begin position="70"/>
        <end position="74"/>
    </location>
    <ligand>
        <name>GTP</name>
        <dbReference type="ChEBI" id="CHEBI:37565"/>
    </ligand>
</feature>
<feature type="binding site" evidence="1">
    <location>
        <begin position="129"/>
        <end position="132"/>
    </location>
    <ligand>
        <name>GTP</name>
        <dbReference type="ChEBI" id="CHEBI:37565"/>
    </ligand>
</feature>
<sequence length="184" mass="20573">MGLWDSLLNWLRSLFFKQEMELSLVGLQNAGKTSLVNAIATGGYSEDMIPTVGFNMRKVTKGNVTIKIWDLGGQRRFRTMWERYCRGVSAIVYVIDAADRDSVPISRSELNDLLTKPSLNGIPLLILGNKIDKSEALSKQALVDQLGLESVTDREVCCYMISCKDSINIDAVIDWLIKHSRTAT</sequence>
<accession>Q8W4C8</accession>
<accession>Q9FHQ2</accession>